<organism>
    <name type="scientific">Oryza sativa subsp. japonica</name>
    <name type="common">Rice</name>
    <dbReference type="NCBI Taxonomy" id="39947"/>
    <lineage>
        <taxon>Eukaryota</taxon>
        <taxon>Viridiplantae</taxon>
        <taxon>Streptophyta</taxon>
        <taxon>Embryophyta</taxon>
        <taxon>Tracheophyta</taxon>
        <taxon>Spermatophyta</taxon>
        <taxon>Magnoliopsida</taxon>
        <taxon>Liliopsida</taxon>
        <taxon>Poales</taxon>
        <taxon>Poaceae</taxon>
        <taxon>BOP clade</taxon>
        <taxon>Oryzoideae</taxon>
        <taxon>Oryzeae</taxon>
        <taxon>Oryzinae</taxon>
        <taxon>Oryza</taxon>
        <taxon>Oryza sativa</taxon>
    </lineage>
</organism>
<gene>
    <name type="primary">PHT1-12</name>
    <name type="synonym">PT12</name>
    <name type="ordered locus">Os03g0150500</name>
    <name type="ordered locus">LOC_Os03g05610</name>
    <name type="ORF">OsJ_009085</name>
    <name type="ORF">OSJNBb0050N02.17</name>
</gene>
<feature type="chain" id="PRO_0000365492" description="Probable inorganic phosphate transporter 1-12">
    <location>
        <begin position="1"/>
        <end position="541"/>
    </location>
</feature>
<feature type="topological domain" description="Cytoplasmic" evidence="2">
    <location>
        <begin position="1"/>
        <end position="26"/>
    </location>
</feature>
<feature type="transmembrane region" description="Helical" evidence="2">
    <location>
        <begin position="27"/>
        <end position="47"/>
    </location>
</feature>
<feature type="topological domain" description="Extracellular" evidence="2">
    <location>
        <begin position="48"/>
        <end position="70"/>
    </location>
</feature>
<feature type="transmembrane region" description="Helical" evidence="2">
    <location>
        <begin position="71"/>
        <end position="91"/>
    </location>
</feature>
<feature type="topological domain" description="Cytoplasmic" evidence="2">
    <location>
        <begin position="92"/>
        <end position="100"/>
    </location>
</feature>
<feature type="transmembrane region" description="Helical" evidence="2">
    <location>
        <begin position="101"/>
        <end position="121"/>
    </location>
</feature>
<feature type="topological domain" description="Extracellular" evidence="2">
    <location>
        <begin position="122"/>
        <end position="124"/>
    </location>
</feature>
<feature type="transmembrane region" description="Helical" evidence="2">
    <location>
        <begin position="125"/>
        <end position="145"/>
    </location>
</feature>
<feature type="topological domain" description="Cytoplasmic" evidence="2">
    <location>
        <begin position="146"/>
        <end position="163"/>
    </location>
</feature>
<feature type="transmembrane region" description="Helical" evidence="2">
    <location>
        <begin position="164"/>
        <end position="184"/>
    </location>
</feature>
<feature type="topological domain" description="Extracellular" evidence="2">
    <location>
        <begin position="185"/>
        <end position="213"/>
    </location>
</feature>
<feature type="transmembrane region" description="Helical" evidence="2">
    <location>
        <begin position="214"/>
        <end position="234"/>
    </location>
</feature>
<feature type="topological domain" description="Cytoplasmic" evidence="2">
    <location>
        <begin position="235"/>
        <end position="297"/>
    </location>
</feature>
<feature type="transmembrane region" description="Helical" evidence="2">
    <location>
        <begin position="298"/>
        <end position="318"/>
    </location>
</feature>
<feature type="topological domain" description="Extracellular" evidence="2">
    <location>
        <begin position="319"/>
        <end position="349"/>
    </location>
</feature>
<feature type="transmembrane region" description="Helical" evidence="2">
    <location>
        <begin position="350"/>
        <end position="370"/>
    </location>
</feature>
<feature type="topological domain" description="Cytoplasmic" evidence="2">
    <location>
        <begin position="371"/>
        <end position="374"/>
    </location>
</feature>
<feature type="transmembrane region" description="Helical" evidence="2">
    <location>
        <begin position="375"/>
        <end position="395"/>
    </location>
</feature>
<feature type="topological domain" description="Extracellular" evidence="2">
    <location>
        <begin position="396"/>
        <end position="403"/>
    </location>
</feature>
<feature type="transmembrane region" description="Helical" evidence="2">
    <location>
        <begin position="404"/>
        <end position="424"/>
    </location>
</feature>
<feature type="topological domain" description="Cytoplasmic" evidence="2">
    <location>
        <begin position="425"/>
        <end position="443"/>
    </location>
</feature>
<feature type="transmembrane region" description="Helical" evidence="2">
    <location>
        <begin position="444"/>
        <end position="464"/>
    </location>
</feature>
<feature type="topological domain" description="Extracellular" evidence="2">
    <location>
        <begin position="465"/>
        <end position="484"/>
    </location>
</feature>
<feature type="transmembrane region" description="Helical" evidence="2">
    <location>
        <begin position="485"/>
        <end position="505"/>
    </location>
</feature>
<feature type="topological domain" description="Cytoplasmic" evidence="2">
    <location>
        <begin position="506"/>
        <end position="541"/>
    </location>
</feature>
<feature type="region of interest" description="Disordered" evidence="3">
    <location>
        <begin position="512"/>
        <end position="541"/>
    </location>
</feature>
<feature type="compositionally biased region" description="Acidic residues" evidence="3">
    <location>
        <begin position="515"/>
        <end position="524"/>
    </location>
</feature>
<feature type="compositionally biased region" description="Polar residues" evidence="3">
    <location>
        <begin position="532"/>
        <end position="541"/>
    </location>
</feature>
<feature type="sequence conflict" description="In Ref. 7; AK106694." evidence="5" ref="7">
    <original>S</original>
    <variation>G</variation>
    <location>
        <position position="336"/>
    </location>
</feature>
<keyword id="KW-0472">Membrane</keyword>
<keyword id="KW-0592">Phosphate transport</keyword>
<keyword id="KW-1185">Reference proteome</keyword>
<keyword id="KW-0769">Symport</keyword>
<keyword id="KW-0812">Transmembrane</keyword>
<keyword id="KW-1133">Transmembrane helix</keyword>
<keyword id="KW-0813">Transport</keyword>
<reference key="1">
    <citation type="journal article" date="2002" name="Proc. Natl. Acad. Sci. U.S.A.">
        <title>Rice phosphate transporters include an evolutionarily divergent gene specifically activated in arbuscular mycorrhizal symbiosis.</title>
        <authorList>
            <person name="Paszkowski U."/>
            <person name="Kroken S."/>
            <person name="Roux C."/>
            <person name="Briggs S.P."/>
        </authorList>
    </citation>
    <scope>NUCLEOTIDE SEQUENCE [GENOMIC DNA]</scope>
</reference>
<reference key="2">
    <citation type="journal article" date="2005" name="Genome Res.">
        <title>Sequence, annotation, and analysis of synteny between rice chromosome 3 and diverged grass species.</title>
        <authorList>
            <consortium name="The rice chromosome 3 sequencing consortium"/>
            <person name="Buell C.R."/>
            <person name="Yuan Q."/>
            <person name="Ouyang S."/>
            <person name="Liu J."/>
            <person name="Zhu W."/>
            <person name="Wang A."/>
            <person name="Maiti R."/>
            <person name="Haas B."/>
            <person name="Wortman J."/>
            <person name="Pertea M."/>
            <person name="Jones K.M."/>
            <person name="Kim M."/>
            <person name="Overton L."/>
            <person name="Tsitrin T."/>
            <person name="Fadrosh D."/>
            <person name="Bera J."/>
            <person name="Weaver B."/>
            <person name="Jin S."/>
            <person name="Johri S."/>
            <person name="Reardon M."/>
            <person name="Webb K."/>
            <person name="Hill J."/>
            <person name="Moffat K."/>
            <person name="Tallon L."/>
            <person name="Van Aken S."/>
            <person name="Lewis M."/>
            <person name="Utterback T."/>
            <person name="Feldblyum T."/>
            <person name="Zismann V."/>
            <person name="Iobst S."/>
            <person name="Hsiao J."/>
            <person name="de Vazeille A.R."/>
            <person name="Salzberg S.L."/>
            <person name="White O."/>
            <person name="Fraser C.M."/>
            <person name="Yu Y."/>
            <person name="Kim H."/>
            <person name="Rambo T."/>
            <person name="Currie J."/>
            <person name="Collura K."/>
            <person name="Kernodle-Thompson S."/>
            <person name="Wei F."/>
            <person name="Kudrna K."/>
            <person name="Ammiraju J.S.S."/>
            <person name="Luo M."/>
            <person name="Goicoechea J.L."/>
            <person name="Wing R.A."/>
            <person name="Henry D."/>
            <person name="Oates R."/>
            <person name="Palmer M."/>
            <person name="Pries G."/>
            <person name="Saski C."/>
            <person name="Simmons J."/>
            <person name="Soderlund C."/>
            <person name="Nelson W."/>
            <person name="de la Bastide M."/>
            <person name="Spiegel L."/>
            <person name="Nascimento L."/>
            <person name="Huang E."/>
            <person name="Preston R."/>
            <person name="Zutavern T."/>
            <person name="Palmer L."/>
            <person name="O'Shaughnessy A."/>
            <person name="Dike S."/>
            <person name="McCombie W.R."/>
            <person name="Minx P."/>
            <person name="Cordum H."/>
            <person name="Wilson R."/>
            <person name="Jin W."/>
            <person name="Lee H.R."/>
            <person name="Jiang J."/>
            <person name="Jackson S."/>
        </authorList>
    </citation>
    <scope>NUCLEOTIDE SEQUENCE [LARGE SCALE GENOMIC DNA]</scope>
    <source>
        <strain>cv. Nipponbare</strain>
    </source>
</reference>
<reference key="3">
    <citation type="journal article" date="2005" name="Nature">
        <title>The map-based sequence of the rice genome.</title>
        <authorList>
            <consortium name="International rice genome sequencing project (IRGSP)"/>
        </authorList>
    </citation>
    <scope>NUCLEOTIDE SEQUENCE [LARGE SCALE GENOMIC DNA]</scope>
    <source>
        <strain>cv. Nipponbare</strain>
    </source>
</reference>
<reference key="4">
    <citation type="journal article" date="2008" name="Nucleic Acids Res.">
        <title>The rice annotation project database (RAP-DB): 2008 update.</title>
        <authorList>
            <consortium name="The rice annotation project (RAP)"/>
        </authorList>
    </citation>
    <scope>GENOME REANNOTATION</scope>
    <source>
        <strain>cv. Nipponbare</strain>
    </source>
</reference>
<reference key="5">
    <citation type="journal article" date="2013" name="Rice">
        <title>Improvement of the Oryza sativa Nipponbare reference genome using next generation sequence and optical map data.</title>
        <authorList>
            <person name="Kawahara Y."/>
            <person name="de la Bastide M."/>
            <person name="Hamilton J.P."/>
            <person name="Kanamori H."/>
            <person name="McCombie W.R."/>
            <person name="Ouyang S."/>
            <person name="Schwartz D.C."/>
            <person name="Tanaka T."/>
            <person name="Wu J."/>
            <person name="Zhou S."/>
            <person name="Childs K.L."/>
            <person name="Davidson R.M."/>
            <person name="Lin H."/>
            <person name="Quesada-Ocampo L."/>
            <person name="Vaillancourt B."/>
            <person name="Sakai H."/>
            <person name="Lee S.S."/>
            <person name="Kim J."/>
            <person name="Numa H."/>
            <person name="Itoh T."/>
            <person name="Buell C.R."/>
            <person name="Matsumoto T."/>
        </authorList>
    </citation>
    <scope>GENOME REANNOTATION</scope>
    <source>
        <strain>cv. Nipponbare</strain>
    </source>
</reference>
<reference key="6">
    <citation type="journal article" date="2005" name="PLoS Biol.">
        <title>The genomes of Oryza sativa: a history of duplications.</title>
        <authorList>
            <person name="Yu J."/>
            <person name="Wang J."/>
            <person name="Lin W."/>
            <person name="Li S."/>
            <person name="Li H."/>
            <person name="Zhou J."/>
            <person name="Ni P."/>
            <person name="Dong W."/>
            <person name="Hu S."/>
            <person name="Zeng C."/>
            <person name="Zhang J."/>
            <person name="Zhang Y."/>
            <person name="Li R."/>
            <person name="Xu Z."/>
            <person name="Li S."/>
            <person name="Li X."/>
            <person name="Zheng H."/>
            <person name="Cong L."/>
            <person name="Lin L."/>
            <person name="Yin J."/>
            <person name="Geng J."/>
            <person name="Li G."/>
            <person name="Shi J."/>
            <person name="Liu J."/>
            <person name="Lv H."/>
            <person name="Li J."/>
            <person name="Wang J."/>
            <person name="Deng Y."/>
            <person name="Ran L."/>
            <person name="Shi X."/>
            <person name="Wang X."/>
            <person name="Wu Q."/>
            <person name="Li C."/>
            <person name="Ren X."/>
            <person name="Wang J."/>
            <person name="Wang X."/>
            <person name="Li D."/>
            <person name="Liu D."/>
            <person name="Zhang X."/>
            <person name="Ji Z."/>
            <person name="Zhao W."/>
            <person name="Sun Y."/>
            <person name="Zhang Z."/>
            <person name="Bao J."/>
            <person name="Han Y."/>
            <person name="Dong L."/>
            <person name="Ji J."/>
            <person name="Chen P."/>
            <person name="Wu S."/>
            <person name="Liu J."/>
            <person name="Xiao Y."/>
            <person name="Bu D."/>
            <person name="Tan J."/>
            <person name="Yang L."/>
            <person name="Ye C."/>
            <person name="Zhang J."/>
            <person name="Xu J."/>
            <person name="Zhou Y."/>
            <person name="Yu Y."/>
            <person name="Zhang B."/>
            <person name="Zhuang S."/>
            <person name="Wei H."/>
            <person name="Liu B."/>
            <person name="Lei M."/>
            <person name="Yu H."/>
            <person name="Li Y."/>
            <person name="Xu H."/>
            <person name="Wei S."/>
            <person name="He X."/>
            <person name="Fang L."/>
            <person name="Zhang Z."/>
            <person name="Zhang Y."/>
            <person name="Huang X."/>
            <person name="Su Z."/>
            <person name="Tong W."/>
            <person name="Li J."/>
            <person name="Tong Z."/>
            <person name="Li S."/>
            <person name="Ye J."/>
            <person name="Wang L."/>
            <person name="Fang L."/>
            <person name="Lei T."/>
            <person name="Chen C.-S."/>
            <person name="Chen H.-C."/>
            <person name="Xu Z."/>
            <person name="Li H."/>
            <person name="Huang H."/>
            <person name="Zhang F."/>
            <person name="Xu H."/>
            <person name="Li N."/>
            <person name="Zhao C."/>
            <person name="Li S."/>
            <person name="Dong L."/>
            <person name="Huang Y."/>
            <person name="Li L."/>
            <person name="Xi Y."/>
            <person name="Qi Q."/>
            <person name="Li W."/>
            <person name="Zhang B."/>
            <person name="Hu W."/>
            <person name="Zhang Y."/>
            <person name="Tian X."/>
            <person name="Jiao Y."/>
            <person name="Liang X."/>
            <person name="Jin J."/>
            <person name="Gao L."/>
            <person name="Zheng W."/>
            <person name="Hao B."/>
            <person name="Liu S.-M."/>
            <person name="Wang W."/>
            <person name="Yuan L."/>
            <person name="Cao M."/>
            <person name="McDermott J."/>
            <person name="Samudrala R."/>
            <person name="Wang J."/>
            <person name="Wong G.K.-S."/>
            <person name="Yang H."/>
        </authorList>
    </citation>
    <scope>NUCLEOTIDE SEQUENCE [LARGE SCALE GENOMIC DNA]</scope>
    <source>
        <strain>cv. Nipponbare</strain>
    </source>
</reference>
<reference key="7">
    <citation type="journal article" date="2003" name="Science">
        <title>Collection, mapping, and annotation of over 28,000 cDNA clones from japonica rice.</title>
        <authorList>
            <consortium name="The rice full-length cDNA consortium"/>
        </authorList>
    </citation>
    <scope>NUCLEOTIDE SEQUENCE [LARGE SCALE MRNA]</scope>
    <source>
        <strain>cv. Nipponbare</strain>
    </source>
</reference>
<reference key="8">
    <citation type="journal article" date="2008" name="Biotechnol. Lett.">
        <title>Increased expression of OsPT1, a high-affinity phosphate transporter, enhances phosphate acquisition in rice.</title>
        <authorList>
            <person name="Seo H.-M."/>
            <person name="Jung Y."/>
            <person name="Song S."/>
            <person name="Kim Y."/>
            <person name="Kwon T."/>
            <person name="Kim D.-H."/>
            <person name="Jeung S.-J."/>
            <person name="Yi Y.-B."/>
            <person name="Yi G."/>
            <person name="Nam M.-H."/>
            <person name="Nam J."/>
        </authorList>
    </citation>
    <scope>INDUCTION</scope>
</reference>
<name>PT112_ORYSJ</name>
<protein>
    <recommendedName>
        <fullName>Probable inorganic phosphate transporter 1-12</fullName>
        <shortName>OsPT12</shortName>
        <shortName>OsPht1;12</shortName>
    </recommendedName>
    <alternativeName>
        <fullName>H(+)/Pi cotransporter</fullName>
    </alternativeName>
</protein>
<sequence length="541" mass="58704">MGRQDQQLQVLNALDAAKTQWYHFTAIIVAGMGFFTDAYDLFCISLVTKLLGRIYYTDPASPTPGSLPPNIAAAVNGVALCGTLSGQLFFGWLGDKLGRKSVYGMTLLLMVICSIASGLSFSHTPTSVMATLCFFRFWLGFGIGGDYPLSATIMSEYANKKTRGAFIAAVFAMQGFGILAGGVVTLAMSAGFQAAFPAPAYEVNAAASTVPQADYVWRIILMLGALPAILTYYWRMKMPETARYTALVAKDAKQASSDMAKVLQVEIEVEEEKLQDITRGRDYGLFSARFAKRHGAHLLGTAATWFLVDVAYYSQNLFQKDIFTSIHWIPKARTMSELEEVFRISRAQTLIALCGTVPGYWFTVFLIDIIGRFKIQLLGFAGMTAFMLGLAIPYHHWTMPGNQVIFVFLYGFTFFFANFGPNATTFIVPAEIFPARLRSTCHGISAASGKAGAIIGAFGFLYAAQPQDKAHVDAGYKPGIGVRNALFVLAGCNLVGFLMTWMLVPESKGKSLEEMSGEADDEEASANGGATAVNSSGVEMV</sequence>
<evidence type="ECO:0000250" key="1"/>
<evidence type="ECO:0000255" key="2"/>
<evidence type="ECO:0000256" key="3">
    <source>
        <dbReference type="SAM" id="MobiDB-lite"/>
    </source>
</evidence>
<evidence type="ECO:0000269" key="4">
    <source>
    </source>
</evidence>
<evidence type="ECO:0000305" key="5"/>
<dbReference type="EMBL" id="AF536972">
    <property type="protein sequence ID" value="AAN39053.1"/>
    <property type="molecule type" value="Genomic_DNA"/>
</dbReference>
<dbReference type="EMBL" id="AC105734">
    <property type="protein sequence ID" value="AAN87745.1"/>
    <property type="molecule type" value="Genomic_DNA"/>
</dbReference>
<dbReference type="EMBL" id="DP000009">
    <property type="protein sequence ID" value="ABF94005.1"/>
    <property type="molecule type" value="Genomic_DNA"/>
</dbReference>
<dbReference type="EMBL" id="AP008209">
    <property type="protein sequence ID" value="BAF10890.1"/>
    <property type="molecule type" value="Genomic_DNA"/>
</dbReference>
<dbReference type="EMBL" id="AP014959">
    <property type="protein sequence ID" value="BAS82315.1"/>
    <property type="molecule type" value="Genomic_DNA"/>
</dbReference>
<dbReference type="EMBL" id="CM000140">
    <property type="protein sequence ID" value="EAZ25602.1"/>
    <property type="molecule type" value="Genomic_DNA"/>
</dbReference>
<dbReference type="EMBL" id="AK106694">
    <property type="status" value="NOT_ANNOTATED_CDS"/>
    <property type="molecule type" value="mRNA"/>
</dbReference>
<dbReference type="RefSeq" id="XP_015631296.1">
    <property type="nucleotide sequence ID" value="XM_015775810.1"/>
</dbReference>
<dbReference type="SMR" id="Q8H074"/>
<dbReference type="FunCoup" id="Q8H074">
    <property type="interactions" value="411"/>
</dbReference>
<dbReference type="STRING" id="39947.Q8H074"/>
<dbReference type="PaxDb" id="39947-Q8H074"/>
<dbReference type="EnsemblPlants" id="Os03t0150500-01">
    <property type="protein sequence ID" value="Os03t0150500-01"/>
    <property type="gene ID" value="Os03g0150500"/>
</dbReference>
<dbReference type="Gramene" id="Os03t0150500-01">
    <property type="protein sequence ID" value="Os03t0150500-01"/>
    <property type="gene ID" value="Os03g0150500"/>
</dbReference>
<dbReference type="KEGG" id="dosa:Os03g0150500"/>
<dbReference type="eggNOG" id="KOG0252">
    <property type="taxonomic scope" value="Eukaryota"/>
</dbReference>
<dbReference type="HOGENOM" id="CLU_001265_46_14_1"/>
<dbReference type="InParanoid" id="Q8H074"/>
<dbReference type="OMA" id="HHWTMPG"/>
<dbReference type="OrthoDB" id="433512at2759"/>
<dbReference type="Proteomes" id="UP000000763">
    <property type="component" value="Chromosome 3"/>
</dbReference>
<dbReference type="Proteomes" id="UP000007752">
    <property type="component" value="Chromosome 3"/>
</dbReference>
<dbReference type="Proteomes" id="UP000059680">
    <property type="component" value="Chromosome 3"/>
</dbReference>
<dbReference type="GO" id="GO:0016020">
    <property type="term" value="C:membrane"/>
    <property type="evidence" value="ECO:0007669"/>
    <property type="project" value="UniProtKB-SubCell"/>
</dbReference>
<dbReference type="GO" id="GO:0005315">
    <property type="term" value="F:phosphate transmembrane transporter activity"/>
    <property type="evidence" value="ECO:0007669"/>
    <property type="project" value="InterPro"/>
</dbReference>
<dbReference type="GO" id="GO:0015293">
    <property type="term" value="F:symporter activity"/>
    <property type="evidence" value="ECO:0007669"/>
    <property type="project" value="UniProtKB-KW"/>
</dbReference>
<dbReference type="GO" id="GO:0006817">
    <property type="term" value="P:phosphate ion transport"/>
    <property type="evidence" value="ECO:0007669"/>
    <property type="project" value="UniProtKB-KW"/>
</dbReference>
<dbReference type="CDD" id="cd17364">
    <property type="entry name" value="MFS_PhT"/>
    <property type="match status" value="1"/>
</dbReference>
<dbReference type="FunFam" id="1.20.1250.20:FF:000175">
    <property type="entry name" value="Inorganic phosphate transporter 1-6"/>
    <property type="match status" value="1"/>
</dbReference>
<dbReference type="Gene3D" id="1.20.1250.20">
    <property type="entry name" value="MFS general substrate transporter like domains"/>
    <property type="match status" value="1"/>
</dbReference>
<dbReference type="InterPro" id="IPR020846">
    <property type="entry name" value="MFS_dom"/>
</dbReference>
<dbReference type="InterPro" id="IPR005828">
    <property type="entry name" value="MFS_sugar_transport-like"/>
</dbReference>
<dbReference type="InterPro" id="IPR036259">
    <property type="entry name" value="MFS_trans_sf"/>
</dbReference>
<dbReference type="InterPro" id="IPR004738">
    <property type="entry name" value="Phos_permease"/>
</dbReference>
<dbReference type="NCBIfam" id="TIGR00887">
    <property type="entry name" value="2A0109"/>
    <property type="match status" value="1"/>
</dbReference>
<dbReference type="PANTHER" id="PTHR24064">
    <property type="entry name" value="SOLUTE CARRIER FAMILY 22 MEMBER"/>
    <property type="match status" value="1"/>
</dbReference>
<dbReference type="Pfam" id="PF00083">
    <property type="entry name" value="Sugar_tr"/>
    <property type="match status" value="1"/>
</dbReference>
<dbReference type="SUPFAM" id="SSF103473">
    <property type="entry name" value="MFS general substrate transporter"/>
    <property type="match status" value="1"/>
</dbReference>
<dbReference type="PROSITE" id="PS50850">
    <property type="entry name" value="MFS"/>
    <property type="match status" value="1"/>
</dbReference>
<proteinExistence type="evidence at transcript level"/>
<accession>Q8H074</accession>
<accession>A0A0P0VT49</accession>
<accession>Q8H6G5</accession>
<comment type="function">
    <text evidence="1">High-affinity transporter for external inorganic phosphate.</text>
</comment>
<comment type="subcellular location">
    <subcellularLocation>
        <location evidence="1">Membrane</location>
        <topology evidence="1">Multi-pass membrane protein</topology>
    </subcellularLocation>
</comment>
<comment type="induction">
    <text evidence="4">In roots by phosphate starvation.</text>
</comment>
<comment type="miscellaneous">
    <text>Although related to the sugar transporter family, it does not transport sugars.</text>
</comment>
<comment type="similarity">
    <text evidence="5">Belongs to the major facilitator superfamily. Phosphate:H(+) symporter (TC 2.A.1.9) family.</text>
</comment>